<evidence type="ECO:0000255" key="1">
    <source>
        <dbReference type="HAMAP-Rule" id="MF_00650"/>
    </source>
</evidence>
<comment type="function">
    <text evidence="1">Transfers 2'-(5-triphosphoribosyl)-3'-dephosphocoenzyme-A to the apo-[acyl-carrier-protein] of the malonate decarboxylase to yield holo-[acyl-carrier-protein].</text>
</comment>
<comment type="catalytic activity">
    <reaction evidence="1">
        <text>apo-[malonate decarboxylase ACP] + 2'-(5''-triphospho-alpha-D-ribosyl)-3'-dephospho-CoA = holo-[malonate decarboxylase ACP] + diphosphate</text>
        <dbReference type="Rhea" id="RHEA:42644"/>
        <dbReference type="Rhea" id="RHEA-COMP:10160"/>
        <dbReference type="Rhea" id="RHEA-COMP:10161"/>
        <dbReference type="ChEBI" id="CHEBI:29999"/>
        <dbReference type="ChEBI" id="CHEBI:33019"/>
        <dbReference type="ChEBI" id="CHEBI:61378"/>
        <dbReference type="ChEBI" id="CHEBI:82683"/>
        <dbReference type="EC" id="2.7.7.66"/>
    </reaction>
</comment>
<comment type="similarity">
    <text evidence="1">Belongs to the MdcG family.</text>
</comment>
<keyword id="KW-0548">Nucleotidyltransferase</keyword>
<keyword id="KW-0808">Transferase</keyword>
<feature type="chain" id="PRO_0000220295" description="Phosphoribosyl-dephospho-CoA transferase">
    <location>
        <begin position="1"/>
        <end position="204"/>
    </location>
</feature>
<feature type="active site" evidence="1">
    <location>
        <position position="129"/>
    </location>
</feature>
<feature type="active site" evidence="1">
    <location>
        <position position="131"/>
    </location>
</feature>
<organism>
    <name type="scientific">Pseudomonas putida</name>
    <name type="common">Arthrobacter siderocapsulatus</name>
    <dbReference type="NCBI Taxonomy" id="303"/>
    <lineage>
        <taxon>Bacteria</taxon>
        <taxon>Pseudomonadati</taxon>
        <taxon>Pseudomonadota</taxon>
        <taxon>Gammaproteobacteria</taxon>
        <taxon>Pseudomonadales</taxon>
        <taxon>Pseudomonadaceae</taxon>
        <taxon>Pseudomonas</taxon>
    </lineage>
</organism>
<gene>
    <name evidence="1" type="primary">mdcG</name>
</gene>
<sequence>MNAPRPHDLLWGMPVSGLPTDAPQWALEVLASGQPVVVRRATCEAGWVAVGLRGHGRAQRLGALMRLTDIQRQQGPEALRVHGQSPWPALQALASVTPVLQARGLAWGPTGGVGYQLATGMEVVHAGSDLDLLLRTPRPLARAQARELLDILDCAPCRIDVQLETPSGAVALREWASFALRVLLKSPHGPRLVSDPWAVMERAP</sequence>
<dbReference type="EC" id="2.7.7.66" evidence="1"/>
<dbReference type="EMBL" id="AB017138">
    <property type="protein sequence ID" value="BAA36209.1"/>
    <property type="molecule type" value="Genomic_DNA"/>
</dbReference>
<dbReference type="GO" id="GO:0016779">
    <property type="term" value="F:nucleotidyltransferase activity"/>
    <property type="evidence" value="ECO:0007669"/>
    <property type="project" value="UniProtKB-UniRule"/>
</dbReference>
<dbReference type="HAMAP" id="MF_00650">
    <property type="entry name" value="Malonate_MdcG"/>
    <property type="match status" value="1"/>
</dbReference>
<dbReference type="InterPro" id="IPR017557">
    <property type="entry name" value="Holo-ACP_synthase"/>
</dbReference>
<dbReference type="InterPro" id="IPR049180">
    <property type="entry name" value="MdcG_C"/>
</dbReference>
<dbReference type="InterPro" id="IPR048903">
    <property type="entry name" value="MdcG_N"/>
</dbReference>
<dbReference type="NCBIfam" id="TIGR03135">
    <property type="entry name" value="malonate_mdcG"/>
    <property type="match status" value="1"/>
</dbReference>
<dbReference type="NCBIfam" id="NF002332">
    <property type="entry name" value="PRK01293.1"/>
    <property type="match status" value="1"/>
</dbReference>
<dbReference type="Pfam" id="PF10620">
    <property type="entry name" value="MdcG"/>
    <property type="match status" value="1"/>
</dbReference>
<dbReference type="Pfam" id="PF20866">
    <property type="entry name" value="MdcG_N"/>
    <property type="match status" value="1"/>
</dbReference>
<protein>
    <recommendedName>
        <fullName evidence="1">Phosphoribosyl-dephospho-CoA transferase</fullName>
        <ecNumber evidence="1">2.7.7.66</ecNumber>
    </recommendedName>
    <alternativeName>
        <fullName evidence="1">Malonate decarboxylase holo-[acyl-carrier-protein] synthase</fullName>
        <shortName evidence="1">Holo-ACP synthase</shortName>
    </alternativeName>
</protein>
<name>MDCG_PSEPU</name>
<proteinExistence type="inferred from homology"/>
<accession>Q9Z448</accession>
<reference key="1">
    <citation type="journal article" date="1999" name="FEMS Microbiol. Lett.">
        <title>Cloning and characterization of mdc genes encoding malonate decarboxylase from Pseudomonas putida.</title>
        <authorList>
            <person name="Chohnan S."/>
            <person name="Kurusu Y."/>
            <person name="Nishihara H."/>
            <person name="Takamura Y."/>
        </authorList>
    </citation>
    <scope>NUCLEOTIDE SEQUENCE [GENOMIC DNA]</scope>
    <source>
        <strain>JCM 20089 / IAM 1177</strain>
    </source>
</reference>